<accession>Q9HS17</accession>
<organism>
    <name type="scientific">Halobacterium salinarum (strain ATCC 700922 / JCM 11081 / NRC-1)</name>
    <name type="common">Halobacterium halobium</name>
    <dbReference type="NCBI Taxonomy" id="64091"/>
    <lineage>
        <taxon>Archaea</taxon>
        <taxon>Methanobacteriati</taxon>
        <taxon>Methanobacteriota</taxon>
        <taxon>Stenosarchaea group</taxon>
        <taxon>Halobacteria</taxon>
        <taxon>Halobacteriales</taxon>
        <taxon>Halobacteriaceae</taxon>
        <taxon>Halobacterium</taxon>
        <taxon>Halobacterium salinarum NRC-34001</taxon>
    </lineage>
</organism>
<protein>
    <recommendedName>
        <fullName evidence="1">Glucose 1-dehydrogenase</fullName>
        <shortName evidence="1">GDH</shortName>
        <shortName evidence="1">GlcDH</shortName>
        <ecNumber evidence="1">1.1.1.47</ecNumber>
    </recommendedName>
</protein>
<dbReference type="EC" id="1.1.1.47" evidence="1"/>
<dbReference type="EMBL" id="AE004437">
    <property type="protein sequence ID" value="AAG18991.1"/>
    <property type="molecule type" value="Genomic_DNA"/>
</dbReference>
<dbReference type="PIR" id="C84203">
    <property type="entry name" value="C84203"/>
</dbReference>
<dbReference type="RefSeq" id="WP_010902286.1">
    <property type="nucleotide sequence ID" value="NC_002607.1"/>
</dbReference>
<dbReference type="SMR" id="Q9HS17"/>
<dbReference type="STRING" id="64091.VNG_0446G"/>
<dbReference type="PaxDb" id="64091-VNG_0446G"/>
<dbReference type="KEGG" id="hal:VNG_0446G"/>
<dbReference type="PATRIC" id="fig|64091.14.peg.335"/>
<dbReference type="HOGENOM" id="CLU_026673_1_0_2"/>
<dbReference type="InParanoid" id="Q9HS17"/>
<dbReference type="OrthoDB" id="41394at2157"/>
<dbReference type="PhylomeDB" id="Q9HS17"/>
<dbReference type="Proteomes" id="UP000000554">
    <property type="component" value="Chromosome"/>
</dbReference>
<dbReference type="GO" id="GO:0005536">
    <property type="term" value="F:D-glucose binding"/>
    <property type="evidence" value="ECO:0007669"/>
    <property type="project" value="UniProtKB-UniRule"/>
</dbReference>
<dbReference type="GO" id="GO:0047934">
    <property type="term" value="F:glucose 1-dehydrogenase (NAD+) activity"/>
    <property type="evidence" value="ECO:0007669"/>
    <property type="project" value="RHEA"/>
</dbReference>
<dbReference type="GO" id="GO:0047935">
    <property type="term" value="F:glucose 1-dehydrogenase (NADP+) activity"/>
    <property type="evidence" value="ECO:0007669"/>
    <property type="project" value="RHEA"/>
</dbReference>
<dbReference type="GO" id="GO:0070403">
    <property type="term" value="F:NAD+ binding"/>
    <property type="evidence" value="ECO:0007669"/>
    <property type="project" value="UniProtKB-UniRule"/>
</dbReference>
<dbReference type="GO" id="GO:0070401">
    <property type="term" value="F:NADP+ binding"/>
    <property type="evidence" value="ECO:0007669"/>
    <property type="project" value="UniProtKB-UniRule"/>
</dbReference>
<dbReference type="GO" id="GO:0008270">
    <property type="term" value="F:zinc ion binding"/>
    <property type="evidence" value="ECO:0007669"/>
    <property type="project" value="UniProtKB-UniRule"/>
</dbReference>
<dbReference type="GO" id="GO:0019595">
    <property type="term" value="P:non-phosphorylated glucose catabolic process"/>
    <property type="evidence" value="ECO:0007669"/>
    <property type="project" value="UniProtKB-UniRule"/>
</dbReference>
<dbReference type="CDD" id="cd08230">
    <property type="entry name" value="glucose_DH"/>
    <property type="match status" value="1"/>
</dbReference>
<dbReference type="Gene3D" id="3.90.180.10">
    <property type="entry name" value="Medium-chain alcohol dehydrogenases, catalytic domain"/>
    <property type="match status" value="1"/>
</dbReference>
<dbReference type="Gene3D" id="3.40.50.720">
    <property type="entry name" value="NAD(P)-binding Rossmann-like Domain"/>
    <property type="match status" value="1"/>
</dbReference>
<dbReference type="HAMAP" id="MF_02127">
    <property type="entry name" value="Glucose_DH"/>
    <property type="match status" value="1"/>
</dbReference>
<dbReference type="InterPro" id="IPR013154">
    <property type="entry name" value="ADH-like_N"/>
</dbReference>
<dbReference type="InterPro" id="IPR026583">
    <property type="entry name" value="Glc_1-DH_arc"/>
</dbReference>
<dbReference type="InterPro" id="IPR031640">
    <property type="entry name" value="Glu_dehyd_C"/>
</dbReference>
<dbReference type="InterPro" id="IPR011032">
    <property type="entry name" value="GroES-like_sf"/>
</dbReference>
<dbReference type="InterPro" id="IPR036291">
    <property type="entry name" value="NAD(P)-bd_dom_sf"/>
</dbReference>
<dbReference type="PANTHER" id="PTHR43189:SF2">
    <property type="entry name" value="GLUCOSE 1-DEHYDROGENASE"/>
    <property type="match status" value="1"/>
</dbReference>
<dbReference type="PANTHER" id="PTHR43189">
    <property type="entry name" value="ZINC-TYPE ALCOHOL DEHYDROGENASE-LIKE PROTEIN C1198.01-RELATED"/>
    <property type="match status" value="1"/>
</dbReference>
<dbReference type="Pfam" id="PF08240">
    <property type="entry name" value="ADH_N"/>
    <property type="match status" value="1"/>
</dbReference>
<dbReference type="Pfam" id="PF16912">
    <property type="entry name" value="Glu_dehyd_C"/>
    <property type="match status" value="1"/>
</dbReference>
<dbReference type="SUPFAM" id="SSF50129">
    <property type="entry name" value="GroES-like"/>
    <property type="match status" value="1"/>
</dbReference>
<dbReference type="SUPFAM" id="SSF51735">
    <property type="entry name" value="NAD(P)-binding Rossmann-fold domains"/>
    <property type="match status" value="1"/>
</dbReference>
<keyword id="KW-0119">Carbohydrate metabolism</keyword>
<keyword id="KW-0479">Metal-binding</keyword>
<keyword id="KW-0520">NAD</keyword>
<keyword id="KW-0521">NADP</keyword>
<keyword id="KW-0547">Nucleotide-binding</keyword>
<keyword id="KW-0560">Oxidoreductase</keyword>
<keyword id="KW-1185">Reference proteome</keyword>
<keyword id="KW-0862">Zinc</keyword>
<reference key="1">
    <citation type="journal article" date="2000" name="Proc. Natl. Acad. Sci. U.S.A.">
        <title>Genome sequence of Halobacterium species NRC-1.</title>
        <authorList>
            <person name="Ng W.V."/>
            <person name="Kennedy S.P."/>
            <person name="Mahairas G.G."/>
            <person name="Berquist B."/>
            <person name="Pan M."/>
            <person name="Shukla H.D."/>
            <person name="Lasky S.R."/>
            <person name="Baliga N.S."/>
            <person name="Thorsson V."/>
            <person name="Sbrogna J."/>
            <person name="Swartzell S."/>
            <person name="Weir D."/>
            <person name="Hall J."/>
            <person name="Dahl T.A."/>
            <person name="Welti R."/>
            <person name="Goo Y.A."/>
            <person name="Leithauser B."/>
            <person name="Keller K."/>
            <person name="Cruz R."/>
            <person name="Danson M.J."/>
            <person name="Hough D.W."/>
            <person name="Maddocks D.G."/>
            <person name="Jablonski P.E."/>
            <person name="Krebs M.P."/>
            <person name="Angevine C.M."/>
            <person name="Dale H."/>
            <person name="Isenbarger T.A."/>
            <person name="Peck R.F."/>
            <person name="Pohlschroder M."/>
            <person name="Spudich J.L."/>
            <person name="Jung K.-H."/>
            <person name="Alam M."/>
            <person name="Freitas T."/>
            <person name="Hou S."/>
            <person name="Daniels C.J."/>
            <person name="Dennis P.P."/>
            <person name="Omer A.D."/>
            <person name="Ebhardt H."/>
            <person name="Lowe T.M."/>
            <person name="Liang P."/>
            <person name="Riley M."/>
            <person name="Hood L."/>
            <person name="DasSarma S."/>
        </authorList>
    </citation>
    <scope>NUCLEOTIDE SEQUENCE [LARGE SCALE GENOMIC DNA]</scope>
    <source>
        <strain>ATCC 700922 / JCM 11081 / NRC-1</strain>
    </source>
</reference>
<feature type="chain" id="PRO_0000414831" description="Glucose 1-dehydrogenase">
    <location>
        <begin position="1"/>
        <end position="356"/>
    </location>
</feature>
<feature type="region of interest" description="Disordered" evidence="2">
    <location>
        <begin position="1"/>
        <end position="26"/>
    </location>
</feature>
<feature type="region of interest" description="Disordered" evidence="2">
    <location>
        <begin position="86"/>
        <end position="107"/>
    </location>
</feature>
<feature type="compositionally biased region" description="Basic and acidic residues" evidence="2">
    <location>
        <begin position="8"/>
        <end position="21"/>
    </location>
</feature>
<feature type="binding site" evidence="1">
    <location>
        <position position="38"/>
    </location>
    <ligand>
        <name>Zn(2+)</name>
        <dbReference type="ChEBI" id="CHEBI:29105"/>
        <note>catalytic</note>
    </ligand>
</feature>
<feature type="binding site" evidence="1">
    <location>
        <position position="40"/>
    </location>
    <ligand>
        <name>substrate</name>
    </ligand>
</feature>
<feature type="binding site" evidence="1">
    <location>
        <position position="63"/>
    </location>
    <ligand>
        <name>Zn(2+)</name>
        <dbReference type="ChEBI" id="CHEBI:29105"/>
        <note>catalytic</note>
    </ligand>
</feature>
<feature type="binding site" evidence="1">
    <location>
        <position position="64"/>
    </location>
    <ligand>
        <name>Zn(2+)</name>
        <dbReference type="ChEBI" id="CHEBI:29105"/>
        <note>catalytic</note>
    </ligand>
</feature>
<feature type="binding site" evidence="1">
    <location>
        <position position="113"/>
    </location>
    <ligand>
        <name>substrate</name>
    </ligand>
</feature>
<feature type="binding site" evidence="1">
    <location>
        <position position="149"/>
    </location>
    <ligand>
        <name>substrate</name>
    </ligand>
</feature>
<feature type="binding site" evidence="1">
    <location>
        <position position="149"/>
    </location>
    <ligand>
        <name>Zn(2+)</name>
        <dbReference type="ChEBI" id="CHEBI:29105"/>
        <note>catalytic</note>
    </ligand>
</feature>
<feature type="binding site" evidence="1">
    <location>
        <begin position="180"/>
        <end position="183"/>
    </location>
    <ligand>
        <name>NADP(+)</name>
        <dbReference type="ChEBI" id="CHEBI:58349"/>
    </ligand>
</feature>
<feature type="binding site" evidence="1">
    <location>
        <begin position="205"/>
        <end position="206"/>
    </location>
    <ligand>
        <name>NADP(+)</name>
        <dbReference type="ChEBI" id="CHEBI:58349"/>
    </ligand>
</feature>
<feature type="binding site" evidence="1">
    <location>
        <begin position="270"/>
        <end position="272"/>
    </location>
    <ligand>
        <name>NADP(+)</name>
        <dbReference type="ChEBI" id="CHEBI:58349"/>
    </ligand>
</feature>
<feature type="binding site" evidence="1">
    <location>
        <begin position="300"/>
        <end position="302"/>
    </location>
    <ligand>
        <name>NADP(+)</name>
        <dbReference type="ChEBI" id="CHEBI:58349"/>
    </ligand>
</feature>
<feature type="binding site" evidence="1">
    <location>
        <position position="302"/>
    </location>
    <ligand>
        <name>substrate</name>
    </ligand>
</feature>
<proteinExistence type="inferred from homology"/>
<comment type="function">
    <text evidence="1">Catalyzes the NAD(P)(+)-dependent oxidation of D-glucose to D-gluconate via gluconolactone. Can utilize both NAD(+) and NADP(+) as electron acceptor. Is involved in the degradation of glucose through a modified Entner-Doudoroff pathway.</text>
</comment>
<comment type="catalytic activity">
    <reaction evidence="1">
        <text>D-glucose + NAD(+) = D-glucono-1,5-lactone + NADH + H(+)</text>
        <dbReference type="Rhea" id="RHEA:14293"/>
        <dbReference type="ChEBI" id="CHEBI:4167"/>
        <dbReference type="ChEBI" id="CHEBI:15378"/>
        <dbReference type="ChEBI" id="CHEBI:16217"/>
        <dbReference type="ChEBI" id="CHEBI:57540"/>
        <dbReference type="ChEBI" id="CHEBI:57945"/>
        <dbReference type="EC" id="1.1.1.47"/>
    </reaction>
</comment>
<comment type="catalytic activity">
    <reaction evidence="1">
        <text>D-glucose + NADP(+) = D-glucono-1,5-lactone + NADPH + H(+)</text>
        <dbReference type="Rhea" id="RHEA:14405"/>
        <dbReference type="ChEBI" id="CHEBI:4167"/>
        <dbReference type="ChEBI" id="CHEBI:15378"/>
        <dbReference type="ChEBI" id="CHEBI:16217"/>
        <dbReference type="ChEBI" id="CHEBI:57783"/>
        <dbReference type="ChEBI" id="CHEBI:58349"/>
        <dbReference type="EC" id="1.1.1.47"/>
    </reaction>
</comment>
<comment type="cofactor">
    <cofactor evidence="1">
        <name>Zn(2+)</name>
        <dbReference type="ChEBI" id="CHEBI:29105"/>
    </cofactor>
</comment>
<comment type="similarity">
    <text evidence="1">Belongs to the zinc-containing alcohol dehydrogenase family. Glucose 1-dehydrogenase subfamily.</text>
</comment>
<name>GLCDH_HALSA</name>
<evidence type="ECO:0000255" key="1">
    <source>
        <dbReference type="HAMAP-Rule" id="MF_02127"/>
    </source>
</evidence>
<evidence type="ECO:0000256" key="2">
    <source>
        <dbReference type="SAM" id="MobiDB-lite"/>
    </source>
</evidence>
<gene>
    <name evidence="1" type="primary">gdh</name>
    <name type="synonym">gcd</name>
    <name type="ordered locus">VNG_0446G</name>
</gene>
<sequence length="356" mass="37510">MDAIVVSKADRTPRLVDRPRPDPTPGSVLVRTLRVGVDGTDHEVIAGTHGGFPEDADELVLGHEAIGVVADPTDTRFSAGQLVAPTVRRPRGDPTPQFDRGQPDMAAPGTYVERGIDGADGFMADYFTSPADALVALPDSLAAHGFLTEPVSVAEKAIELALASRSAFDWRPDSALVLGNGSLGLLTLAILAARDDTETLYCLGRRSRPDPTIDIIERLGATYIDSRTTPVADIPAAHQPVDMVYEATGHAKHAFDAIDALAPAGVAALLGVPAAGWTFEVPGSDLHRSLVLENKAVVGSVNSNARHFRAAADTLAALPDWLCDAIVTGVHDTAAFADAFRDGETSIKTAVQFDTR</sequence>